<name>PRIM_BPP4</name>
<dbReference type="EC" id="2.7.7.-"/>
<dbReference type="EC" id="3.6.4.12"/>
<dbReference type="EMBL" id="X05623">
    <property type="protein sequence ID" value="CAA29111.1"/>
    <property type="molecule type" value="Genomic_DNA"/>
</dbReference>
<dbReference type="EMBL" id="X51522">
    <property type="protein sequence ID" value="CAA35898.1"/>
    <property type="molecule type" value="Genomic_DNA"/>
</dbReference>
<dbReference type="RefSeq" id="NP_042036.1">
    <property type="nucleotide sequence ID" value="NC_001609.1"/>
</dbReference>
<dbReference type="PDB" id="1KA8">
    <property type="method" value="X-ray"/>
    <property type="resolution" value="2.95 A"/>
    <property type="chains" value="A/B/C/D/E/F=671-770"/>
</dbReference>
<dbReference type="PDBsum" id="1KA8"/>
<dbReference type="SMR" id="P10277"/>
<dbReference type="KEGG" id="vg:1261095"/>
<dbReference type="OrthoDB" id="3810at10239"/>
<dbReference type="EvolutionaryTrace" id="P10277"/>
<dbReference type="Proteomes" id="UP000009093">
    <property type="component" value="Genome"/>
</dbReference>
<dbReference type="GO" id="GO:0000428">
    <property type="term" value="C:DNA-directed RNA polymerase complex"/>
    <property type="evidence" value="ECO:0007669"/>
    <property type="project" value="UniProtKB-KW"/>
</dbReference>
<dbReference type="GO" id="GO:0005524">
    <property type="term" value="F:ATP binding"/>
    <property type="evidence" value="ECO:0007669"/>
    <property type="project" value="UniProtKB-KW"/>
</dbReference>
<dbReference type="GO" id="GO:0016887">
    <property type="term" value="F:ATP hydrolysis activity"/>
    <property type="evidence" value="ECO:0007669"/>
    <property type="project" value="RHEA"/>
</dbReference>
<dbReference type="GO" id="GO:0003677">
    <property type="term" value="F:DNA binding"/>
    <property type="evidence" value="ECO:0007669"/>
    <property type="project" value="UniProtKB-KW"/>
</dbReference>
<dbReference type="GO" id="GO:0003899">
    <property type="term" value="F:DNA-directed RNA polymerase activity"/>
    <property type="evidence" value="ECO:0000314"/>
    <property type="project" value="CACAO"/>
</dbReference>
<dbReference type="GO" id="GO:0004386">
    <property type="term" value="F:helicase activity"/>
    <property type="evidence" value="ECO:0007669"/>
    <property type="project" value="UniProtKB-KW"/>
</dbReference>
<dbReference type="GO" id="GO:0008270">
    <property type="term" value="F:zinc ion binding"/>
    <property type="evidence" value="ECO:0007669"/>
    <property type="project" value="UniProtKB-KW"/>
</dbReference>
<dbReference type="GO" id="GO:0006269">
    <property type="term" value="P:DNA replication, synthesis of primer"/>
    <property type="evidence" value="ECO:0007669"/>
    <property type="project" value="UniProtKB-KW"/>
</dbReference>
<dbReference type="CDD" id="cd01029">
    <property type="entry name" value="TOPRIM_primases"/>
    <property type="match status" value="1"/>
</dbReference>
<dbReference type="Gene3D" id="3.40.1360.10">
    <property type="match status" value="1"/>
</dbReference>
<dbReference type="Gene3D" id="3.40.50.300">
    <property type="entry name" value="P-loop containing nucleotide triphosphate hydrolases"/>
    <property type="match status" value="1"/>
</dbReference>
<dbReference type="Gene3D" id="1.10.10.10">
    <property type="entry name" value="Winged helix-like DNA-binding domain superfamily/Winged helix DNA-binding domain"/>
    <property type="match status" value="1"/>
</dbReference>
<dbReference type="Gene3D" id="3.90.580.10">
    <property type="entry name" value="Zinc finger, CHC2-type domain"/>
    <property type="match status" value="1"/>
</dbReference>
<dbReference type="InterPro" id="IPR004968">
    <property type="entry name" value="DNA_primase/NTPase_C"/>
</dbReference>
<dbReference type="InterPro" id="IPR036977">
    <property type="entry name" value="DNA_primase_Znf_CHC2"/>
</dbReference>
<dbReference type="InterPro" id="IPR014015">
    <property type="entry name" value="Helicase_SF3_DNA-vir"/>
</dbReference>
<dbReference type="InterPro" id="IPR045455">
    <property type="entry name" value="NrS-1_pol-like_helicase"/>
</dbReference>
<dbReference type="InterPro" id="IPR027417">
    <property type="entry name" value="P-loop_NTPase"/>
</dbReference>
<dbReference type="InterPro" id="IPR014818">
    <property type="entry name" value="Phage/plasmid_primase_P4_C"/>
</dbReference>
<dbReference type="InterPro" id="IPR013237">
    <property type="entry name" value="Phage_T7_Gp4_N"/>
</dbReference>
<dbReference type="InterPro" id="IPR034154">
    <property type="entry name" value="TOPRIM_DnaG/twinkle"/>
</dbReference>
<dbReference type="InterPro" id="IPR006171">
    <property type="entry name" value="TOPRIM_dom"/>
</dbReference>
<dbReference type="InterPro" id="IPR051620">
    <property type="entry name" value="Viral_Helicase-Primase_Cplx"/>
</dbReference>
<dbReference type="InterPro" id="IPR036388">
    <property type="entry name" value="WH-like_DNA-bd_sf"/>
</dbReference>
<dbReference type="InterPro" id="IPR036390">
    <property type="entry name" value="WH_DNA-bd_sf"/>
</dbReference>
<dbReference type="PANTHER" id="PTHR35372">
    <property type="entry name" value="ATP BINDING PROTEIN-RELATED"/>
    <property type="match status" value="1"/>
</dbReference>
<dbReference type="PANTHER" id="PTHR35372:SF2">
    <property type="entry name" value="SF3 HELICASE DOMAIN-CONTAINING PROTEIN"/>
    <property type="match status" value="1"/>
</dbReference>
<dbReference type="Pfam" id="PF08706">
    <property type="entry name" value="D5_N"/>
    <property type="match status" value="1"/>
</dbReference>
<dbReference type="Pfam" id="PF19263">
    <property type="entry name" value="DUF5906"/>
    <property type="match status" value="1"/>
</dbReference>
<dbReference type="Pfam" id="PF03288">
    <property type="entry name" value="Pox_D5"/>
    <property type="match status" value="1"/>
</dbReference>
<dbReference type="Pfam" id="PF13362">
    <property type="entry name" value="Toprim_3"/>
    <property type="match status" value="1"/>
</dbReference>
<dbReference type="Pfam" id="PF08273">
    <property type="entry name" value="Zn_Ribbon_Prim"/>
    <property type="match status" value="1"/>
</dbReference>
<dbReference type="SMART" id="SM00885">
    <property type="entry name" value="D5_N"/>
    <property type="match status" value="1"/>
</dbReference>
<dbReference type="SMART" id="SM00778">
    <property type="entry name" value="Prim_Zn_Ribbon"/>
    <property type="match status" value="1"/>
</dbReference>
<dbReference type="SMART" id="SM00493">
    <property type="entry name" value="TOPRIM"/>
    <property type="match status" value="1"/>
</dbReference>
<dbReference type="SUPFAM" id="SSF52540">
    <property type="entry name" value="P-loop containing nucleoside triphosphate hydrolases"/>
    <property type="match status" value="1"/>
</dbReference>
<dbReference type="SUPFAM" id="SSF46785">
    <property type="entry name" value="Winged helix' DNA-binding domain"/>
    <property type="match status" value="1"/>
</dbReference>
<dbReference type="SUPFAM" id="SSF57783">
    <property type="entry name" value="Zinc beta-ribbon"/>
    <property type="match status" value="1"/>
</dbReference>
<dbReference type="PROSITE" id="PS51206">
    <property type="entry name" value="SF3_HELICASE_1"/>
    <property type="match status" value="1"/>
</dbReference>
<dbReference type="PROSITE" id="PS50880">
    <property type="entry name" value="TOPRIM"/>
    <property type="match status" value="1"/>
</dbReference>
<evidence type="ECO:0000255" key="1">
    <source>
        <dbReference type="PROSITE-ProRule" id="PRU00551"/>
    </source>
</evidence>
<evidence type="ECO:0000255" key="2">
    <source>
        <dbReference type="PROSITE-ProRule" id="PRU00995"/>
    </source>
</evidence>
<evidence type="ECO:0000305" key="3"/>
<evidence type="ECO:0007829" key="4">
    <source>
        <dbReference type="PDB" id="1KA8"/>
    </source>
</evidence>
<keyword id="KW-0002">3D-structure</keyword>
<keyword id="KW-0067">ATP-binding</keyword>
<keyword id="KW-0235">DNA replication</keyword>
<keyword id="KW-0238">DNA-binding</keyword>
<keyword id="KW-0240">DNA-directed RNA polymerase</keyword>
<keyword id="KW-0347">Helicase</keyword>
<keyword id="KW-0378">Hydrolase</keyword>
<keyword id="KW-0479">Metal-binding</keyword>
<keyword id="KW-0547">Nucleotide-binding</keyword>
<keyword id="KW-0548">Nucleotidyltransferase</keyword>
<keyword id="KW-0639">Primosome</keyword>
<keyword id="KW-1185">Reference proteome</keyword>
<keyword id="KW-0804">Transcription</keyword>
<keyword id="KW-0808">Transferase</keyword>
<keyword id="KW-0862">Zinc</keyword>
<keyword id="KW-0863">Zinc-finger</keyword>
<proteinExistence type="evidence at protein level"/>
<sequence length="777" mass="84919">MKMNVTATVSHALGHWPRILPALGIQVLKNRHQPCPVCGGSDRFRFDDREGRGTWYCNQCGAGDGLKLVEKVFGVSPSDAAAKVAAVTGSLPPADPAVTTAAVDETDAARKNAAALAQTLMAKTRTGTGNAYLTRKGFPGRECRMLTGTHRAGGVSWRAGDLVVPLYDDSGELVNLQLISADGRKRTLKGGQVRGTCHTLEGQNQAGKRLWIAEGYATALTVHHLTGETVMVALSSVNLLSLASLARQKHPACQIVLAADRDLSGDGQKKAAAAADACEGVVALPPVFGDWNDAFTQYGGEATRKAIYDAIRPPAESPFDTMSEAEFSAMSTSEKAMRIYEHYGEALAVDANGQLLSRYENGVWKVLPPQDFARDVAGLFQRLRAPFSSGKVASVVDTLKLIIPQQEAPSRRLIGFRNGVLDTQNGTFHPHSPSHWMRTLCDVDFTPPVDGETLETHAPAFWRWLDRAAGGRAEKRDVILAALFMVLANRYDWQLFLEVTGPGGSGKSIMAEIATLLAGEDNATSATIETLESPRERAALTGFSLIRLPDQEKWSGDGAGLKAITGGDAVSVDPKYRDAYSTHIPAVILAVNNNPMRFTDRSGGVSRRRVIIHFPEQIAPQERDPQLKDKITRELAVIVRHLMQKFSDPMLARSLLQSQQNSDEALNIKRDADPTFDFIGYLETLPQTSGMYMGNASIIPRNYRKYLYHAYLAYMEANGYRNVLSLKMFGLGLPVMLKEYGLNYEKRHTKQGIQTNLTLKEESYGDWLPKCDDPTTA</sequence>
<feature type="chain" id="PRO_0000165224" description="Putative P4-specific DNA primase">
    <location>
        <begin position="1"/>
        <end position="777"/>
    </location>
</feature>
<feature type="domain" description="Toprim" evidence="2">
    <location>
        <begin position="208"/>
        <end position="296"/>
    </location>
</feature>
<feature type="domain" description="SF3 helicase" evidence="1">
    <location>
        <begin position="474"/>
        <end position="627"/>
    </location>
</feature>
<feature type="zinc finger region" description="CHC2-type" evidence="3">
    <location>
        <begin position="35"/>
        <end position="60"/>
    </location>
</feature>
<feature type="binding site" evidence="1">
    <location>
        <begin position="501"/>
        <end position="508"/>
    </location>
    <ligand>
        <name>ATP</name>
        <dbReference type="ChEBI" id="CHEBI:30616"/>
    </ligand>
</feature>
<feature type="helix" evidence="4">
    <location>
        <begin position="674"/>
        <end position="678"/>
    </location>
</feature>
<feature type="helix" evidence="4">
    <location>
        <begin position="679"/>
        <end position="681"/>
    </location>
</feature>
<feature type="strand" evidence="4">
    <location>
        <begin position="682"/>
        <end position="684"/>
    </location>
</feature>
<feature type="strand" evidence="4">
    <location>
        <begin position="686"/>
        <end position="688"/>
    </location>
</feature>
<feature type="turn" evidence="4">
    <location>
        <begin position="703"/>
        <end position="705"/>
    </location>
</feature>
<feature type="helix" evidence="4">
    <location>
        <begin position="707"/>
        <end position="717"/>
    </location>
</feature>
<feature type="helix" evidence="4">
    <location>
        <begin position="726"/>
        <end position="739"/>
    </location>
</feature>
<feature type="strand" evidence="4">
    <location>
        <begin position="746"/>
        <end position="749"/>
    </location>
</feature>
<feature type="strand" evidence="4">
    <location>
        <begin position="752"/>
        <end position="759"/>
    </location>
</feature>
<feature type="helix" evidence="4">
    <location>
        <begin position="762"/>
        <end position="766"/>
    </location>
</feature>
<comment type="function">
    <text>This protein acts as a DNA primase generating di- to pentaribonucleotides; the predominant product being the dimer pppApG. It complexes specifically to the P4 origin of replication (ori) and its cis replication region (crr). It also acts as a DNA helicase.</text>
</comment>
<comment type="catalytic activity">
    <reaction>
        <text>ATP + H2O = ADP + phosphate + H(+)</text>
        <dbReference type="Rhea" id="RHEA:13065"/>
        <dbReference type="ChEBI" id="CHEBI:15377"/>
        <dbReference type="ChEBI" id="CHEBI:15378"/>
        <dbReference type="ChEBI" id="CHEBI:30616"/>
        <dbReference type="ChEBI" id="CHEBI:43474"/>
        <dbReference type="ChEBI" id="CHEBI:456216"/>
        <dbReference type="EC" id="3.6.4.12"/>
    </reaction>
</comment>
<comment type="subunit">
    <text>Homohexamer.</text>
</comment>
<organismHost>
    <name type="scientific">Escherichia coli</name>
    <dbReference type="NCBI Taxonomy" id="562"/>
</organismHost>
<protein>
    <recommendedName>
        <fullName>Putative P4-specific DNA primase</fullName>
        <ecNumber>2.7.7.-</ecNumber>
        <ecNumber>3.6.4.12</ecNumber>
    </recommendedName>
</protein>
<reference key="1">
    <citation type="journal article" date="1987" name="J. Mol. Biol.">
        <title>Bacteriophage P4 DNA replication. Nucleotide sequence of the P4 replication gene and the cis replication region.</title>
        <authorList>
            <person name="Flensburg J."/>
            <person name="Calendar R."/>
        </authorList>
    </citation>
    <scope>NUCLEOTIDE SEQUENCE [GENOMIC DNA]</scope>
</reference>
<reference key="2">
    <citation type="journal article" date="1990" name="Nucleic Acids Res.">
        <title>DNA sequence of satellite bacteriophage P4.</title>
        <authorList>
            <person name="Halling C."/>
            <person name="Calendar R."/>
            <person name="Christie G.E."/>
            <person name="Dale E.C."/>
            <person name="Deho G."/>
            <person name="Finkel S."/>
            <person name="Flensburg J."/>
            <person name="Ghisotti D."/>
            <person name="Kahn M.L."/>
            <person name="Lane K.B."/>
            <person name="Lin C.-S."/>
            <person name="Lindqvist B.H."/>
            <person name="Pierson L.S."/>
            <person name="Six E.W."/>
            <person name="Sunshine M.G."/>
            <person name="Ziermann R."/>
        </authorList>
    </citation>
    <scope>NUCLEOTIDE SEQUENCE [LARGE SCALE GENOMIC DNA]</scope>
</reference>
<reference key="3">
    <citation type="journal article" date="1993" name="EMBO J.">
        <title>Phage P4 alpha protein is multifunctional with origin recognition, helicase and primase activities.</title>
        <authorList>
            <person name="Ziegelin G."/>
            <person name="Scherzinger E."/>
            <person name="Lurz R."/>
            <person name="Lanka E."/>
        </authorList>
    </citation>
    <scope>CHARACTERIZATION</scope>
</reference>
<reference key="4">
    <citation type="journal article" date="2002" name="Mol. Microbiol.">
        <title>Phage P4 origin-binding domain structure reveals a mechanism for regulation of DNA-binding activity by homo- and heterodimerization of winged helix proteins.</title>
        <authorList>
            <person name="Yeo H.J."/>
            <person name="Ziegelin G."/>
            <person name="Korolev S."/>
            <person name="Calendar R."/>
            <person name="Lanka E."/>
            <person name="Waksman G."/>
        </authorList>
    </citation>
    <scope>X-RAY CRYSTALLOGRAPHY (2.95 ANGSTROMS) OF 671-770</scope>
</reference>
<accession>P10277</accession>
<gene>
    <name type="primary">Alpha</name>
</gene>
<organism>
    <name type="scientific">Enterobacteria phage P4</name>
    <name type="common">Bacteriophage P4</name>
    <dbReference type="NCBI Taxonomy" id="10680"/>
    <lineage>
        <taxon>Viruses</taxon>
        <taxon>Duplodnaviria</taxon>
        <taxon>Heunggongvirae</taxon>
        <taxon>Uroviricota</taxon>
        <taxon>Caudoviricetes</taxon>
    </lineage>
</organism>